<organism>
    <name type="scientific">Homo sapiens</name>
    <name type="common">Human</name>
    <dbReference type="NCBI Taxonomy" id="9606"/>
    <lineage>
        <taxon>Eukaryota</taxon>
        <taxon>Metazoa</taxon>
        <taxon>Chordata</taxon>
        <taxon>Craniata</taxon>
        <taxon>Vertebrata</taxon>
        <taxon>Euteleostomi</taxon>
        <taxon>Mammalia</taxon>
        <taxon>Eutheria</taxon>
        <taxon>Euarchontoglires</taxon>
        <taxon>Primates</taxon>
        <taxon>Haplorrhini</taxon>
        <taxon>Catarrhini</taxon>
        <taxon>Hominidae</taxon>
        <taxon>Homo</taxon>
    </lineage>
</organism>
<comment type="function">
    <text evidence="3 8 14 18">Glutathione S-transferase that catalyzes the nucleophilic attack of the sulfur atom of glutathione on the electrophilic groups of a wide range of exogenous and endogenous compounds (Probable). Involved in the formation of glutathione conjugates of both prostaglandin A2 (PGA2) and prostaglandin J2 (PGJ2) (PubMed:9084911). It also catalyzes the isomerization of D5-androstene-3,17-dione (AD) into D4-androstene-3,17-dione and may therefore play an important role in hormone biosynthesis (PubMed:11152686). Through its glutathione-dependent peroxidase activity toward the fatty acid hydroperoxide (13S)-hydroperoxy-(9Z,11E)-octadecadienoate/13-HPODE it is also involved in the metabolism of oxidized linoleic acid (PubMed:16624487).</text>
</comment>
<comment type="catalytic activity">
    <reaction evidence="10">
        <text>RX + glutathione = an S-substituted glutathione + a halide anion + H(+)</text>
        <dbReference type="Rhea" id="RHEA:16437"/>
        <dbReference type="ChEBI" id="CHEBI:15378"/>
        <dbReference type="ChEBI" id="CHEBI:16042"/>
        <dbReference type="ChEBI" id="CHEBI:17792"/>
        <dbReference type="ChEBI" id="CHEBI:57925"/>
        <dbReference type="ChEBI" id="CHEBI:90779"/>
        <dbReference type="EC" id="2.5.1.18"/>
    </reaction>
    <physiologicalReaction direction="left-to-right" evidence="18">
        <dbReference type="Rhea" id="RHEA:16438"/>
    </physiologicalReaction>
</comment>
<comment type="catalytic activity">
    <reaction evidence="14">
        <text>prostaglandin A2 + glutathione = prostaglandin A2-S-(R)-glutathione</text>
        <dbReference type="Rhea" id="RHEA:50796"/>
        <dbReference type="ChEBI" id="CHEBI:57925"/>
        <dbReference type="ChEBI" id="CHEBI:133370"/>
        <dbReference type="ChEBI" id="CHEBI:133768"/>
    </reaction>
    <physiologicalReaction direction="left-to-right" evidence="19">
        <dbReference type="Rhea" id="RHEA:50797"/>
    </physiologicalReaction>
</comment>
<comment type="catalytic activity">
    <reaction evidence="14">
        <text>prostaglandin J2 + glutathione = prostaglandin J2-S-(R)-glutathione</text>
        <dbReference type="Rhea" id="RHEA:50804"/>
        <dbReference type="ChEBI" id="CHEBI:57925"/>
        <dbReference type="ChEBI" id="CHEBI:133396"/>
        <dbReference type="ChEBI" id="CHEBI:133771"/>
    </reaction>
    <physiologicalReaction direction="left-to-right" evidence="19">
        <dbReference type="Rhea" id="RHEA:50805"/>
    </physiologicalReaction>
</comment>
<comment type="catalytic activity">
    <reaction evidence="8">
        <text>(13S)-hydroperoxy-(9Z,11E)-octadecadienoate + 2 glutathione = (13S)-hydroxy-(9Z,11E)-octadecadienoate + glutathione disulfide + H2O</text>
        <dbReference type="Rhea" id="RHEA:48888"/>
        <dbReference type="ChEBI" id="CHEBI:15377"/>
        <dbReference type="ChEBI" id="CHEBI:57466"/>
        <dbReference type="ChEBI" id="CHEBI:57925"/>
        <dbReference type="ChEBI" id="CHEBI:58297"/>
        <dbReference type="ChEBI" id="CHEBI:90850"/>
    </reaction>
    <physiologicalReaction direction="left-to-right" evidence="17">
        <dbReference type="Rhea" id="RHEA:48889"/>
    </physiologicalReaction>
</comment>
<comment type="catalytic activity">
    <reaction evidence="3">
        <text>androst-5-ene-3,17-dione = androst-4-ene-3,17-dione</text>
        <dbReference type="Rhea" id="RHEA:43936"/>
        <dbReference type="ChEBI" id="CHEBI:16422"/>
        <dbReference type="ChEBI" id="CHEBI:83865"/>
    </reaction>
    <physiologicalReaction direction="left-to-right" evidence="16">
        <dbReference type="Rhea" id="RHEA:43937"/>
    </physiologicalReaction>
</comment>
<comment type="activity regulation">
    <text evidence="3">The isomerase activity is inhibited by S-methylglutathione (GSMe).</text>
</comment>
<comment type="biophysicochemical properties">
    <kinetics>
        <KM evidence="14">160 uM for prostaglandin A2 (at pH 7.0 and 37 degrees Celsius)</KM>
        <KM evidence="3">160 uM for glutathione (at pH 8.0)</KM>
        <KM evidence="3">58 uM for androst-5-ene-3,17-dione (at pH 8.0)</KM>
        <Vmax evidence="14">121.0 nmol/min/mg enzyme for the formation of the glutathione-S-conjugate of prostaglandin A2 (at pH 7.0 and 37 degrees Celsius)</Vmax>
        <Vmax evidence="3">40.0 umol/min/mg enzyme for the isomerization of androst-5-ene-3,17-dione (at pH 8.0)</Vmax>
        <text evidence="3">kcat is 29.3 sec(-1) for the isomerization of androst-5-ene-3,17-dione.</text>
    </kinetics>
    <phDependence>
        <text evidence="3">Optimum pH is 8.0 for the isomerization of androst-5-ene-3,17-dione.</text>
    </phDependence>
</comment>
<comment type="subunit">
    <text evidence="4 5 6 7 9 10 11 13">Homodimer or heterodimer of GSTA1 and GSTA2.</text>
</comment>
<comment type="interaction">
    <interactant intactId="EBI-2832828">
        <id>P08263</id>
    </interactant>
    <interactant intactId="EBI-21837646">
        <id>Q9BX51</id>
        <label>GGTLC1</label>
    </interactant>
    <organismsDiffer>false</organismsDiffer>
    <experiments>2</experiments>
</comment>
<comment type="subcellular location">
    <subcellularLocation>
        <location>Cytoplasm</location>
    </subcellularLocation>
</comment>
<comment type="tissue specificity">
    <text>Liver.</text>
</comment>
<comment type="domain">
    <text>The C-terminal domain may form a component of the hydrophobic substrate-binding site, but in contrast appears not to be directly involved in GSH binding and is not absolutely essential for catalytic activity.</text>
</comment>
<comment type="similarity">
    <text evidence="15">Belongs to the GST superfamily. Alpha family.</text>
</comment>
<evidence type="ECO:0000250" key="1">
    <source>
        <dbReference type="UniProtKB" id="P30115"/>
    </source>
</evidence>
<evidence type="ECO:0000250" key="2">
    <source>
        <dbReference type="UniProtKB" id="P80894"/>
    </source>
</evidence>
<evidence type="ECO:0000269" key="3">
    <source>
    </source>
</evidence>
<evidence type="ECO:0000269" key="4">
    <source>
    </source>
</evidence>
<evidence type="ECO:0000269" key="5">
    <source>
    </source>
</evidence>
<evidence type="ECO:0000269" key="6">
    <source>
    </source>
</evidence>
<evidence type="ECO:0000269" key="7">
    <source>
    </source>
</evidence>
<evidence type="ECO:0000269" key="8">
    <source>
    </source>
</evidence>
<evidence type="ECO:0000269" key="9">
    <source>
    </source>
</evidence>
<evidence type="ECO:0000269" key="10">
    <source>
    </source>
</evidence>
<evidence type="ECO:0000269" key="11">
    <source>
    </source>
</evidence>
<evidence type="ECO:0000269" key="12">
    <source>
    </source>
</evidence>
<evidence type="ECO:0000269" key="13">
    <source>
    </source>
</evidence>
<evidence type="ECO:0000269" key="14">
    <source>
    </source>
</evidence>
<evidence type="ECO:0000305" key="15"/>
<evidence type="ECO:0000305" key="16">
    <source>
    </source>
</evidence>
<evidence type="ECO:0000305" key="17">
    <source>
    </source>
</evidence>
<evidence type="ECO:0000305" key="18">
    <source>
    </source>
</evidence>
<evidence type="ECO:0000305" key="19">
    <source>
    </source>
</evidence>
<evidence type="ECO:0007829" key="20">
    <source>
        <dbReference type="PDB" id="6ATR"/>
    </source>
</evidence>
<accession>P08263</accession>
<accession>Q14750</accession>
<accession>Q5GHF8</accession>
<accession>Q5SZC1</accession>
<sequence>MAEKPKLHYFNARGRMESTRWLLAAAGVEFEEKFIKSAEDLDKLRNDGYLMFQQVPMVEIDGMKLVQTRAILNYIASKYNLYGKDIKERALIDMYIEGIADLGEMILLLPVCPPEEKDAKLALIKEKIKNRYFPAFEKVLKSHGQDYLVGNKLSRADIHLVELLYYVEELDSSLISSFPLLKALKTRISNLPTVKKFLQPGSPRKPPMDEKSLEEARKIFRF</sequence>
<reference key="1">
    <citation type="journal article" date="1986" name="Biochem. Biophys. Res. Commun.">
        <title>Human liver glutathione S-transferases: complete primary sequence of an Ha subunit cDNA.</title>
        <authorList>
            <person name="Tu C.-P.D."/>
            <person name="Qian B."/>
        </authorList>
    </citation>
    <scope>NUCLEOTIDE SEQUENCE [MRNA]</scope>
</reference>
<reference key="2">
    <citation type="journal article" date="1987" name="Biochem. Biophys. Res. Commun.">
        <title>The basic glutathione S-transferases from human livers are products of separate genes.</title>
        <authorList>
            <person name="Rhoads D.M."/>
            <person name="Zarlengo R.P."/>
            <person name="Tu C.-P.D."/>
        </authorList>
    </citation>
    <scope>NUCLEOTIDE SEQUENCE [MRNA]</scope>
</reference>
<reference key="3">
    <citation type="journal article" date="1987" name="Biochem. Soc. Trans.">
        <title>Nucleotide sequence of the human liver glutathione S-transferase subunit 1 cDNA.</title>
        <authorList>
            <person name="Tu C.-P.D."/>
            <person name="Qian B."/>
        </authorList>
    </citation>
    <scope>NUCLEOTIDE SEQUENCE [MRNA]</scope>
    <source>
        <tissue>Liver</tissue>
    </source>
</reference>
<reference key="4">
    <citation type="journal article" date="1987" name="Proc. Natl. Acad. Sci. U.S.A.">
        <title>Isolation of a cDNA clone and localization of human glutathione S-transferase 2 genes to chromosome band 6p12.</title>
        <authorList>
            <person name="Board P.G."/>
            <person name="Webb G.C."/>
        </authorList>
    </citation>
    <scope>NUCLEOTIDE SEQUENCE [MRNA]</scope>
</reference>
<reference key="5">
    <citation type="journal article" date="1992" name="Arch. Biochem. Biophys.">
        <title>Isolation and characterization of a human glutathione S-transferase Ha1 subunit gene.</title>
        <authorList>
            <person name="Rozen F."/>
            <person name="Nguyen T."/>
            <person name="Pickett C.B."/>
        </authorList>
    </citation>
    <scope>NUCLEOTIDE SEQUENCE [GENOMIC DNA]</scope>
</reference>
<reference key="6">
    <citation type="journal article" date="1992" name="Protein Expr. Purif.">
        <title>Heterologous expression of recombinant human glutathione transferase A1-1 from a hepatoma cell line.</title>
        <authorList>
            <person name="Stenberg G."/>
            <person name="Bjornestedt R."/>
            <person name="Mannervik B."/>
        </authorList>
    </citation>
    <scope>NUCLEOTIDE SEQUENCE [MRNA]</scope>
</reference>
<reference key="7">
    <citation type="submission" date="2004-01" db="EMBL/GenBank/DDBJ databases">
        <authorList>
            <person name="Chen P."/>
            <person name="Zhang C."/>
            <person name="Xie D."/>
            <person name="Wu Y."/>
            <person name="Han L."/>
            <person name="Chen L."/>
        </authorList>
    </citation>
    <scope>NUCLEOTIDE SEQUENCE [MRNA]</scope>
    <source>
        <tissue>Liver</tissue>
    </source>
</reference>
<reference key="8">
    <citation type="journal article" date="2003" name="Nature">
        <title>The DNA sequence and analysis of human chromosome 6.</title>
        <authorList>
            <person name="Mungall A.J."/>
            <person name="Palmer S.A."/>
            <person name="Sims S.K."/>
            <person name="Edwards C.A."/>
            <person name="Ashurst J.L."/>
            <person name="Wilming L."/>
            <person name="Jones M.C."/>
            <person name="Horton R."/>
            <person name="Hunt S.E."/>
            <person name="Scott C.E."/>
            <person name="Gilbert J.G.R."/>
            <person name="Clamp M.E."/>
            <person name="Bethel G."/>
            <person name="Milne S."/>
            <person name="Ainscough R."/>
            <person name="Almeida J.P."/>
            <person name="Ambrose K.D."/>
            <person name="Andrews T.D."/>
            <person name="Ashwell R.I.S."/>
            <person name="Babbage A.K."/>
            <person name="Bagguley C.L."/>
            <person name="Bailey J."/>
            <person name="Banerjee R."/>
            <person name="Barker D.J."/>
            <person name="Barlow K.F."/>
            <person name="Bates K."/>
            <person name="Beare D.M."/>
            <person name="Beasley H."/>
            <person name="Beasley O."/>
            <person name="Bird C.P."/>
            <person name="Blakey S.E."/>
            <person name="Bray-Allen S."/>
            <person name="Brook J."/>
            <person name="Brown A.J."/>
            <person name="Brown J.Y."/>
            <person name="Burford D.C."/>
            <person name="Burrill W."/>
            <person name="Burton J."/>
            <person name="Carder C."/>
            <person name="Carter N.P."/>
            <person name="Chapman J.C."/>
            <person name="Clark S.Y."/>
            <person name="Clark G."/>
            <person name="Clee C.M."/>
            <person name="Clegg S."/>
            <person name="Cobley V."/>
            <person name="Collier R.E."/>
            <person name="Collins J.E."/>
            <person name="Colman L.K."/>
            <person name="Corby N.R."/>
            <person name="Coville G.J."/>
            <person name="Culley K.M."/>
            <person name="Dhami P."/>
            <person name="Davies J."/>
            <person name="Dunn M."/>
            <person name="Earthrowl M.E."/>
            <person name="Ellington A.E."/>
            <person name="Evans K.A."/>
            <person name="Faulkner L."/>
            <person name="Francis M.D."/>
            <person name="Frankish A."/>
            <person name="Frankland J."/>
            <person name="French L."/>
            <person name="Garner P."/>
            <person name="Garnett J."/>
            <person name="Ghori M.J."/>
            <person name="Gilby L.M."/>
            <person name="Gillson C.J."/>
            <person name="Glithero R.J."/>
            <person name="Grafham D.V."/>
            <person name="Grant M."/>
            <person name="Gribble S."/>
            <person name="Griffiths C."/>
            <person name="Griffiths M.N.D."/>
            <person name="Hall R."/>
            <person name="Halls K.S."/>
            <person name="Hammond S."/>
            <person name="Harley J.L."/>
            <person name="Hart E.A."/>
            <person name="Heath P.D."/>
            <person name="Heathcott R."/>
            <person name="Holmes S.J."/>
            <person name="Howden P.J."/>
            <person name="Howe K.L."/>
            <person name="Howell G.R."/>
            <person name="Huckle E."/>
            <person name="Humphray S.J."/>
            <person name="Humphries M.D."/>
            <person name="Hunt A.R."/>
            <person name="Johnson C.M."/>
            <person name="Joy A.A."/>
            <person name="Kay M."/>
            <person name="Keenan S.J."/>
            <person name="Kimberley A.M."/>
            <person name="King A."/>
            <person name="Laird G.K."/>
            <person name="Langford C."/>
            <person name="Lawlor S."/>
            <person name="Leongamornlert D.A."/>
            <person name="Leversha M."/>
            <person name="Lloyd C.R."/>
            <person name="Lloyd D.M."/>
            <person name="Loveland J.E."/>
            <person name="Lovell J."/>
            <person name="Martin S."/>
            <person name="Mashreghi-Mohammadi M."/>
            <person name="Maslen G.L."/>
            <person name="Matthews L."/>
            <person name="McCann O.T."/>
            <person name="McLaren S.J."/>
            <person name="McLay K."/>
            <person name="McMurray A."/>
            <person name="Moore M.J.F."/>
            <person name="Mullikin J.C."/>
            <person name="Niblett D."/>
            <person name="Nickerson T."/>
            <person name="Novik K.L."/>
            <person name="Oliver K."/>
            <person name="Overton-Larty E.K."/>
            <person name="Parker A."/>
            <person name="Patel R."/>
            <person name="Pearce A.V."/>
            <person name="Peck A.I."/>
            <person name="Phillimore B.J.C.T."/>
            <person name="Phillips S."/>
            <person name="Plumb R.W."/>
            <person name="Porter K.M."/>
            <person name="Ramsey Y."/>
            <person name="Ranby S.A."/>
            <person name="Rice C.M."/>
            <person name="Ross M.T."/>
            <person name="Searle S.M."/>
            <person name="Sehra H.K."/>
            <person name="Sheridan E."/>
            <person name="Skuce C.D."/>
            <person name="Smith S."/>
            <person name="Smith M."/>
            <person name="Spraggon L."/>
            <person name="Squares S.L."/>
            <person name="Steward C.A."/>
            <person name="Sycamore N."/>
            <person name="Tamlyn-Hall G."/>
            <person name="Tester J."/>
            <person name="Theaker A.J."/>
            <person name="Thomas D.W."/>
            <person name="Thorpe A."/>
            <person name="Tracey A."/>
            <person name="Tromans A."/>
            <person name="Tubby B."/>
            <person name="Wall M."/>
            <person name="Wallis J.M."/>
            <person name="West A.P."/>
            <person name="White S.S."/>
            <person name="Whitehead S.L."/>
            <person name="Whittaker H."/>
            <person name="Wild A."/>
            <person name="Willey D.J."/>
            <person name="Wilmer T.E."/>
            <person name="Wood J.M."/>
            <person name="Wray P.W."/>
            <person name="Wyatt J.C."/>
            <person name="Young L."/>
            <person name="Younger R.M."/>
            <person name="Bentley D.R."/>
            <person name="Coulson A."/>
            <person name="Durbin R.M."/>
            <person name="Hubbard T."/>
            <person name="Sulston J.E."/>
            <person name="Dunham I."/>
            <person name="Rogers J."/>
            <person name="Beck S."/>
        </authorList>
    </citation>
    <scope>NUCLEOTIDE SEQUENCE [LARGE SCALE GENOMIC DNA]</scope>
</reference>
<reference key="9">
    <citation type="submission" date="2005-07" db="EMBL/GenBank/DDBJ databases">
        <authorList>
            <person name="Mural R.J."/>
            <person name="Istrail S."/>
            <person name="Sutton G.G."/>
            <person name="Florea L."/>
            <person name="Halpern A.L."/>
            <person name="Mobarry C.M."/>
            <person name="Lippert R."/>
            <person name="Walenz B."/>
            <person name="Shatkay H."/>
            <person name="Dew I."/>
            <person name="Miller J.R."/>
            <person name="Flanigan M.J."/>
            <person name="Edwards N.J."/>
            <person name="Bolanos R."/>
            <person name="Fasulo D."/>
            <person name="Halldorsson B.V."/>
            <person name="Hannenhalli S."/>
            <person name="Turner R."/>
            <person name="Yooseph S."/>
            <person name="Lu F."/>
            <person name="Nusskern D.R."/>
            <person name="Shue B.C."/>
            <person name="Zheng X.H."/>
            <person name="Zhong F."/>
            <person name="Delcher A.L."/>
            <person name="Huson D.H."/>
            <person name="Kravitz S.A."/>
            <person name="Mouchard L."/>
            <person name="Reinert K."/>
            <person name="Remington K.A."/>
            <person name="Clark A.G."/>
            <person name="Waterman M.S."/>
            <person name="Eichler E.E."/>
            <person name="Adams M.D."/>
            <person name="Hunkapiller M.W."/>
            <person name="Myers E.W."/>
            <person name="Venter J.C."/>
        </authorList>
    </citation>
    <scope>NUCLEOTIDE SEQUENCE [LARGE SCALE GENOMIC DNA]</scope>
</reference>
<reference key="10">
    <citation type="journal article" date="2004" name="Genome Res.">
        <title>The status, quality, and expansion of the NIH full-length cDNA project: the Mammalian Gene Collection (MGC).</title>
        <authorList>
            <consortium name="The MGC Project Team"/>
        </authorList>
    </citation>
    <scope>NUCLEOTIDE SEQUENCE [LARGE SCALE MRNA]</scope>
    <source>
        <tissue>Brain</tissue>
    </source>
</reference>
<reference key="11">
    <citation type="journal article" date="1988" name="J. Biol. Chem.">
        <title>Human glutathione S-transferases. The Ha multigene family encodes products of different but overlapping substrate specificities.</title>
        <authorList>
            <person name="Chow N.W."/>
            <person name="Whang-Peng J."/>
            <person name="Kao-Shan C.S."/>
            <person name="Tam M.F."/>
            <person name="Lai H.-C.J."/>
            <person name="Tu C.-P.D."/>
        </authorList>
    </citation>
    <scope>NUCLEOTIDE SEQUENCE OF 1-9</scope>
</reference>
<reference key="12">
    <citation type="journal article" date="1993" name="Biochim. Biophys. Acta">
        <title>Characterization of two novel subunits of the alpha-class glutathione S-transferases of human liver.</title>
        <authorList>
            <person name="Ahmad H."/>
            <person name="Singhal S.S."/>
            <person name="Saxena M."/>
            <person name="Awasthi Y.C."/>
        </authorList>
    </citation>
    <scope>PROTEIN SEQUENCE OF 2-170; 188-195 AND 209-222</scope>
</reference>
<reference key="13">
    <citation type="journal article" date="1989" name="Biochem. J.">
        <title>Evidence that glutathione S-transferases B1B1 and B2B2 are the products of separate genes and that their expression in human liver is subject to inter-individual variation. Molecular relationships between the B1 and B2 subunits and other alpha class glutathione S-transferases.</title>
        <authorList>
            <person name="Hayes J.D."/>
            <person name="Kerr L.A."/>
            <person name="Cronshaw A.D."/>
        </authorList>
    </citation>
    <scope>PROTEIN SEQUENCE OF 16-36; 63-155 AND 208-212</scope>
</reference>
<reference key="14">
    <citation type="journal article" date="1991" name="Biochem. J.">
        <title>The contribution of the C-terminal sequence to the catalytic activity of GST2, a human alpha-class glutathione transferase.</title>
        <authorList>
            <person name="Board P.G."/>
            <person name="Mannervik B."/>
        </authorList>
    </citation>
    <scope>PROTEIN SEQUENCE OF 200-222</scope>
</reference>
<reference key="15">
    <citation type="journal article" date="1997" name="Chem. Res. Toxicol.">
        <title>Stereoselective conjugation of prostaglandin A2 and prostaglandin J2 with glutathione, catalyzed by the human glutathione S-transferases A1-1, A2-2, M1a-1a, and P1-1.</title>
        <authorList>
            <person name="Bogaards J.J."/>
            <person name="Venekamp J.C."/>
            <person name="van Bladeren P.J."/>
        </authorList>
    </citation>
    <scope>FUNCTION</scope>
    <scope>CATALYTIC ACTIVITY</scope>
    <scope>BIOPHYSICOCHEMICAL PROPERTIES</scope>
</reference>
<reference key="16">
    <citation type="journal article" date="2001" name="J. Biol. Chem.">
        <title>The role of glutathione in the isomerization of delta 5-androstene-3,17-dione catalyzed by human glutathione transferase A1-1.</title>
        <authorList>
            <person name="Pettersson P.L."/>
            <person name="Mannervik B."/>
        </authorList>
    </citation>
    <scope>FUNCTION</scope>
    <scope>CATALYTIC ACTIVITY</scope>
    <scope>BIOPHYSICOCHEMICAL PROPERTIES</scope>
    <scope>ACTIVITY REGULATION</scope>
    <scope>MUTAGENESIS OF TYR-9</scope>
</reference>
<reference key="17">
    <citation type="journal article" date="2006" name="Biochim. Biophys. Acta">
        <title>Metabolism of oxidized linoleic acid by glutathione transferases: peroxidase activity toward 13-hydroperoxyoctadecadienoic acid.</title>
        <authorList>
            <person name="Seeley S.K."/>
            <person name="Poposki J.A."/>
            <person name="Maksimchuk J."/>
            <person name="Tebbe J."/>
            <person name="Gaudreau J."/>
            <person name="Mannervik B."/>
            <person name="Bull A.W."/>
        </authorList>
    </citation>
    <scope>FUNCTION</scope>
    <scope>CATALYTIC ACTIVITY</scope>
</reference>
<reference key="18">
    <citation type="journal article" date="2014" name="J. Proteomics">
        <title>An enzyme assisted RP-RPLC approach for in-depth analysis of human liver phosphoproteome.</title>
        <authorList>
            <person name="Bian Y."/>
            <person name="Song C."/>
            <person name="Cheng K."/>
            <person name="Dong M."/>
            <person name="Wang F."/>
            <person name="Huang J."/>
            <person name="Sun D."/>
            <person name="Wang L."/>
            <person name="Ye M."/>
            <person name="Zou H."/>
        </authorList>
    </citation>
    <scope>IDENTIFICATION BY MASS SPECTROMETRY [LARGE SCALE ANALYSIS]</scope>
    <source>
        <tissue>Liver</tissue>
    </source>
</reference>
<reference key="19">
    <citation type="journal article" date="1993" name="J. Mol. Biol.">
        <title>Structure determination and refinement of human alpha class glutathione transferase A1-1, and a comparison with the Mu and Pi class enzymes.</title>
        <authorList>
            <person name="Sinning I."/>
            <person name="Kleywegt G.J."/>
            <person name="Cowan S.W."/>
            <person name="Reinemer P."/>
            <person name="Dirr H.W."/>
            <person name="Huber R."/>
            <person name="Gilliland G.L."/>
            <person name="Armstrong R.N."/>
            <person name="Ji X."/>
            <person name="Board P.G."/>
            <person name="Olin B."/>
            <person name="Mannervik B."/>
            <person name="Jones T.A."/>
        </authorList>
    </citation>
    <scope>X-RAY CRYSTALLOGRAPHY (2.6 ANGSTROMS) IN COMPLEX WITH S-BENZYL-GLUTATHIONE</scope>
    <scope>SUBUNIT</scope>
</reference>
<reference key="20">
    <citation type="journal article" date="1995" name="Structure">
        <title>Structural analysis of human alpha-class glutathione transferase A1-1 in the apo-form and in complexes with ethacrynic acid and its glutathione conjugate.</title>
        <authorList>
            <person name="Cameron A.D."/>
            <person name="Sinning I."/>
            <person name="L'Hermite G."/>
            <person name="Olin B."/>
            <person name="Board P.G."/>
            <person name="Mannervik B."/>
            <person name="Jones T.A."/>
        </authorList>
    </citation>
    <scope>X-RAY CRYSTALLOGRAPHY (2.5 ANGSTROMS) IN COMPLEXES WITH ETHACRYNIC ACID AND GLUTATHIONE</scope>
    <scope>SUBUNIT</scope>
</reference>
<reference key="21">
    <citation type="journal article" date="2002" name="Proteins">
        <title>1.3-A resolution structure of human glutathione S-transferase with S-hexyl glutathione bound reveals possible extended ligandin binding site.</title>
        <authorList>
            <person name="Le Trong I."/>
            <person name="Stenkamp R.E."/>
            <person name="Ibarra C."/>
            <person name="Atkins W.M."/>
            <person name="Adman E.T."/>
        </authorList>
    </citation>
    <scope>X-RAY CRYSTALLOGRAPHY (1.3 ANGSTROMS) IN COMPLEXES WITH S-HEXYL GLUTATHIONE</scope>
    <scope>SUBUNIT</scope>
</reference>
<reference key="22">
    <citation type="journal article" date="2004" name="Proc. Natl. Acad. Sci. U.S.A.">
        <title>Incorporation of a single His residue by rational design enables thiol-ester hydrolysis by human glutathione transferase A1-1.</title>
        <authorList>
            <person name="Hederos S."/>
            <person name="Broo K.S."/>
            <person name="Jakobsson E."/>
            <person name="Kleywegt G.J."/>
            <person name="Mannervik B."/>
            <person name="Baltzer L."/>
        </authorList>
    </citation>
    <scope>X-RAY CRYSTALLOGRAPHY (2.07 ANGSTROMS) IN COMPLEX WITH S-BENZYLGLUTATHIONE</scope>
    <scope>MUTAGENESIS OF ALA-216</scope>
</reference>
<reference key="23">
    <citation type="journal article" date="2005" name="J. Mol. Biol.">
        <title>Tertiary interactions stabilise the C-terminal region of human glutathione transferase A1-1: a crystallographic and calorimetric study.</title>
        <authorList>
            <person name="Kuhnert D.C."/>
            <person name="Sayed Y."/>
            <person name="Mosebi S."/>
            <person name="Sayed M."/>
            <person name="Sewell T."/>
            <person name="Dirr H.W."/>
        </authorList>
    </citation>
    <scope>X-RAY CRYSTALLOGRAPHY (1.95 ANGSTROMS) OF MUTANT ALA-219 IN COMPLEX WITH S-HEXYLGLUTATHIONE</scope>
</reference>
<reference key="24">
    <citation type="journal article" date="2006" name="Acta Crystallogr. D">
        <title>New crystal structures of human glutathione transferase A1-1 shed light on glutathione binding and the conformation of the C-terminal helix.</title>
        <authorList>
            <person name="Grahn E."/>
            <person name="Novotny M."/>
            <person name="Jakobsson E."/>
            <person name="Gustafsson A."/>
            <person name="Grehn L."/>
            <person name="Olin B."/>
            <person name="Madsen D."/>
            <person name="Wahlberg M."/>
            <person name="Mannervik B."/>
            <person name="Kleywegt G.J."/>
        </authorList>
    </citation>
    <scope>X-RAY CRYSTALLOGRAPHY (1.75 ANGSTROMS) IN COMPLEX WITH GLUTATHIONE</scope>
    <scope>SUBUNIT</scope>
</reference>
<reference key="25">
    <citation type="journal article" date="2009" name="Biochemistry">
        <title>Structural analysis of a glutathione transferase A1-1 mutant tailored for high catalytic efficiency with toxic alkenals.</title>
        <authorList>
            <person name="Balogh L.M."/>
            <person name="Le Trong I."/>
            <person name="Kripps K.A."/>
            <person name="Tars K."/>
            <person name="Stenkamp R.E."/>
            <person name="Mannervik B."/>
            <person name="Atkins W.M."/>
        </authorList>
    </citation>
    <scope>X-RAY CRYSTALLOGRAPHY (1.98 ANGSTROMS) OF 1-210 IN COMPLEX WITH GLUTATHIONE</scope>
</reference>
<reference key="26">
    <citation type="journal article" date="2010" name="Acta Crystallogr. F">
        <title>The role of a topologically conserved isoleucine in glutathione transferase structure, stability and function.</title>
        <authorList>
            <person name="Achilonu I."/>
            <person name="Gildenhuys S."/>
            <person name="Fisher L."/>
            <person name="Burke J."/>
            <person name="Fanucchi S."/>
            <person name="Sewell B.T."/>
            <person name="Fernandes M."/>
            <person name="Dirr H.W."/>
        </authorList>
    </citation>
    <scope>X-RAY CRYSTALLOGRAPHY (1.75 ANGSTROMS) OF MUTANTS ALA-71 AND VAL-71 IN COMPLEX WITH S-HEXYLGLUTATHIONE</scope>
    <scope>FUNCTION</scope>
    <scope>CATALYTIC ACTIVITY</scope>
    <scope>MUTAGENESIS OF ILE-71</scope>
</reference>
<proteinExistence type="evidence at protein level"/>
<dbReference type="EC" id="2.5.1.18" evidence="10"/>
<dbReference type="EC" id="1.11.1.-" evidence="8"/>
<dbReference type="EC" id="5.3.3.-" evidence="3"/>
<dbReference type="EMBL" id="M15872">
    <property type="protein sequence ID" value="AAA70226.1"/>
    <property type="molecule type" value="mRNA"/>
</dbReference>
<dbReference type="EMBL" id="M21758">
    <property type="protein sequence ID" value="AAA52615.1"/>
    <property type="molecule type" value="mRNA"/>
</dbReference>
<dbReference type="EMBL" id="M25627">
    <property type="protein sequence ID" value="AAA36174.1"/>
    <property type="molecule type" value="mRNA"/>
</dbReference>
<dbReference type="EMBL" id="M14777">
    <property type="protein sequence ID" value="AAA52618.1"/>
    <property type="molecule type" value="mRNA"/>
</dbReference>
<dbReference type="EMBL" id="S76235">
    <property type="protein sequence ID" value="AAB20973.1"/>
    <property type="molecule type" value="Genomic_DNA"/>
</dbReference>
<dbReference type="EMBL" id="S76221">
    <property type="protein sequence ID" value="AAB20973.1"/>
    <property type="status" value="JOINED"/>
    <property type="molecule type" value="Genomic_DNA"/>
</dbReference>
<dbReference type="EMBL" id="S76223">
    <property type="protein sequence ID" value="AAB20973.1"/>
    <property type="status" value="JOINED"/>
    <property type="molecule type" value="Genomic_DNA"/>
</dbReference>
<dbReference type="EMBL" id="S76225">
    <property type="protein sequence ID" value="AAB20973.1"/>
    <property type="status" value="JOINED"/>
    <property type="molecule type" value="Genomic_DNA"/>
</dbReference>
<dbReference type="EMBL" id="S76228">
    <property type="protein sequence ID" value="AAB20973.1"/>
    <property type="status" value="JOINED"/>
    <property type="molecule type" value="Genomic_DNA"/>
</dbReference>
<dbReference type="EMBL" id="S76232">
    <property type="protein sequence ID" value="AAB20973.1"/>
    <property type="status" value="JOINED"/>
    <property type="molecule type" value="Genomic_DNA"/>
</dbReference>
<dbReference type="EMBL" id="S49975">
    <property type="protein sequence ID" value="AAB24012.1"/>
    <property type="molecule type" value="mRNA"/>
</dbReference>
<dbReference type="EMBL" id="AY532928">
    <property type="protein sequence ID" value="AAT06769.1"/>
    <property type="molecule type" value="mRNA"/>
</dbReference>
<dbReference type="EMBL" id="CR407656">
    <property type="protein sequence ID" value="CAG28584.1"/>
    <property type="molecule type" value="mRNA"/>
</dbReference>
<dbReference type="EMBL" id="AL590363">
    <property type="status" value="NOT_ANNOTATED_CDS"/>
    <property type="molecule type" value="Genomic_DNA"/>
</dbReference>
<dbReference type="EMBL" id="CH471081">
    <property type="protein sequence ID" value="EAX04385.1"/>
    <property type="molecule type" value="Genomic_DNA"/>
</dbReference>
<dbReference type="EMBL" id="BC053578">
    <property type="protein sequence ID" value="AAH53578.1"/>
    <property type="molecule type" value="mRNA"/>
</dbReference>
<dbReference type="EMBL" id="BC110891">
    <property type="protein sequence ID" value="AAI10892.1"/>
    <property type="molecule type" value="mRNA"/>
</dbReference>
<dbReference type="CCDS" id="CCDS4945.1"/>
<dbReference type="PIR" id="A25909">
    <property type="entry name" value="A56666"/>
</dbReference>
<dbReference type="PIR" id="S29657">
    <property type="entry name" value="S29657"/>
</dbReference>
<dbReference type="RefSeq" id="NP_665683.1">
    <property type="nucleotide sequence ID" value="NM_145740.5"/>
</dbReference>
<dbReference type="PDB" id="1GSD">
    <property type="method" value="X-ray"/>
    <property type="resolution" value="2.50 A"/>
    <property type="chains" value="A/B/C/D=2-222"/>
</dbReference>
<dbReference type="PDB" id="1GSE">
    <property type="method" value="X-ray"/>
    <property type="resolution" value="2.00 A"/>
    <property type="chains" value="A/B=2-222"/>
</dbReference>
<dbReference type="PDB" id="1GSF">
    <property type="method" value="X-ray"/>
    <property type="resolution" value="2.70 A"/>
    <property type="chains" value="A/B/C/D=2-222"/>
</dbReference>
<dbReference type="PDB" id="1GUH">
    <property type="method" value="X-ray"/>
    <property type="resolution" value="2.60 A"/>
    <property type="chains" value="A/B/C/D=2-222"/>
</dbReference>
<dbReference type="PDB" id="1K3L">
    <property type="method" value="X-ray"/>
    <property type="resolution" value="1.50 A"/>
    <property type="chains" value="A/B=2-222"/>
</dbReference>
<dbReference type="PDB" id="1K3O">
    <property type="method" value="X-ray"/>
    <property type="resolution" value="1.80 A"/>
    <property type="chains" value="A/B=2-222"/>
</dbReference>
<dbReference type="PDB" id="1K3Y">
    <property type="method" value="X-ray"/>
    <property type="resolution" value="1.30 A"/>
    <property type="chains" value="A/B=2-222"/>
</dbReference>
<dbReference type="PDB" id="1LBK">
    <property type="method" value="X-ray"/>
    <property type="resolution" value="1.86 A"/>
    <property type="chains" value="A/B=208-213"/>
</dbReference>
<dbReference type="PDB" id="1PKW">
    <property type="method" value="X-ray"/>
    <property type="resolution" value="2.00 A"/>
    <property type="chains" value="A/B=1-222"/>
</dbReference>
<dbReference type="PDB" id="1PKZ">
    <property type="method" value="X-ray"/>
    <property type="resolution" value="2.10 A"/>
    <property type="chains" value="A/B=1-222"/>
</dbReference>
<dbReference type="PDB" id="1PL1">
    <property type="method" value="X-ray"/>
    <property type="resolution" value="1.75 A"/>
    <property type="chains" value="A/B=1-222"/>
</dbReference>
<dbReference type="PDB" id="1PL2">
    <property type="method" value="X-ray"/>
    <property type="resolution" value="1.80 A"/>
    <property type="chains" value="A/B=1-222"/>
</dbReference>
<dbReference type="PDB" id="1USB">
    <property type="method" value="X-ray"/>
    <property type="resolution" value="2.07 A"/>
    <property type="chains" value="A/B=2-222"/>
</dbReference>
<dbReference type="PDB" id="1XWG">
    <property type="method" value="X-ray"/>
    <property type="resolution" value="1.85 A"/>
    <property type="chains" value="A/B=2-222"/>
</dbReference>
<dbReference type="PDB" id="1YDK">
    <property type="method" value="X-ray"/>
    <property type="resolution" value="1.95 A"/>
    <property type="chains" value="A/B=1-222"/>
</dbReference>
<dbReference type="PDB" id="2R3X">
    <property type="method" value="X-ray"/>
    <property type="resolution" value="1.80 A"/>
    <property type="chains" value="A/B=1-222"/>
</dbReference>
<dbReference type="PDB" id="2R6K">
    <property type="method" value="X-ray"/>
    <property type="resolution" value="2.51 A"/>
    <property type="chains" value="A/B=1-222"/>
</dbReference>
<dbReference type="PDB" id="3I69">
    <property type="method" value="X-ray"/>
    <property type="resolution" value="2.38 A"/>
    <property type="chains" value="A/B/C/D/E/F/G/H=1-222"/>
</dbReference>
<dbReference type="PDB" id="3I6A">
    <property type="method" value="X-ray"/>
    <property type="resolution" value="1.98 A"/>
    <property type="chains" value="A/B/C/D/E/F/G/H=1-222"/>
</dbReference>
<dbReference type="PDB" id="3IK9">
    <property type="method" value="X-ray"/>
    <property type="resolution" value="2.20 A"/>
    <property type="chains" value="A/B/C/D/E/F/G/H=1-222"/>
</dbReference>
<dbReference type="PDB" id="3KTL">
    <property type="method" value="X-ray"/>
    <property type="resolution" value="1.75 A"/>
    <property type="chains" value="A/B=2-222"/>
</dbReference>
<dbReference type="PDB" id="3L0H">
    <property type="method" value="X-ray"/>
    <property type="resolution" value="2.13 A"/>
    <property type="chains" value="A/B=1-222"/>
</dbReference>
<dbReference type="PDB" id="3Q74">
    <property type="method" value="X-ray"/>
    <property type="resolution" value="1.79 A"/>
    <property type="chains" value="A/B=2-222"/>
</dbReference>
<dbReference type="PDB" id="3U6V">
    <property type="method" value="X-ray"/>
    <property type="resolution" value="2.20 A"/>
    <property type="chains" value="A/B=1-222"/>
</dbReference>
<dbReference type="PDB" id="3ZFB">
    <property type="method" value="X-ray"/>
    <property type="resolution" value="1.86 A"/>
    <property type="chains" value="A/B=1-222"/>
</dbReference>
<dbReference type="PDB" id="3ZFL">
    <property type="method" value="X-ray"/>
    <property type="resolution" value="1.88 A"/>
    <property type="chains" value="A/B=1-222"/>
</dbReference>
<dbReference type="PDB" id="4HJ2">
    <property type="method" value="X-ray"/>
    <property type="resolution" value="2.10 A"/>
    <property type="chains" value="A/B=4-220"/>
</dbReference>
<dbReference type="PDB" id="5JCU">
    <property type="method" value="X-ray"/>
    <property type="resolution" value="1.93 A"/>
    <property type="chains" value="A/B/C/D=2-222"/>
</dbReference>
<dbReference type="PDB" id="5LCZ">
    <property type="method" value="X-ray"/>
    <property type="resolution" value="2.33 A"/>
    <property type="chains" value="A/B=1-100, A/B=201-222"/>
</dbReference>
<dbReference type="PDB" id="5LD0">
    <property type="method" value="X-ray"/>
    <property type="resolution" value="1.60 A"/>
    <property type="chains" value="A=1-85, A=214-222"/>
</dbReference>
<dbReference type="PDB" id="6ATO">
    <property type="method" value="X-ray"/>
    <property type="resolution" value="1.55 A"/>
    <property type="chains" value="A/B=2-222"/>
</dbReference>
<dbReference type="PDB" id="6ATP">
    <property type="method" value="X-ray"/>
    <property type="resolution" value="1.70 A"/>
    <property type="chains" value="A/B=2-222"/>
</dbReference>
<dbReference type="PDB" id="6ATQ">
    <property type="method" value="X-ray"/>
    <property type="resolution" value="2.00 A"/>
    <property type="chains" value="A/B=2-222"/>
</dbReference>
<dbReference type="PDB" id="6ATR">
    <property type="method" value="X-ray"/>
    <property type="resolution" value="1.29 A"/>
    <property type="chains" value="A/B=2-222"/>
</dbReference>
<dbReference type="PDB" id="6YAW">
    <property type="method" value="X-ray"/>
    <property type="resolution" value="2.19 A"/>
    <property type="chains" value="A/B=1-222"/>
</dbReference>
<dbReference type="PDB" id="7BIB">
    <property type="method" value="X-ray"/>
    <property type="resolution" value="2.03 A"/>
    <property type="chains" value="A/B=1-222"/>
</dbReference>
<dbReference type="PDB" id="7BIC">
    <property type="method" value="X-ray"/>
    <property type="resolution" value="2.46 A"/>
    <property type="chains" value="A/B/C/D=1-222"/>
</dbReference>
<dbReference type="PDB" id="8BHC">
    <property type="method" value="X-ray"/>
    <property type="resolution" value="1.56 A"/>
    <property type="chains" value="A/B/C/D=1-222"/>
</dbReference>
<dbReference type="PDB" id="8BHE">
    <property type="method" value="X-ray"/>
    <property type="resolution" value="1.87 A"/>
    <property type="chains" value="A/B=1-222"/>
</dbReference>
<dbReference type="PDBsum" id="1GSD"/>
<dbReference type="PDBsum" id="1GSE"/>
<dbReference type="PDBsum" id="1GSF"/>
<dbReference type="PDBsum" id="1GUH"/>
<dbReference type="PDBsum" id="1K3L"/>
<dbReference type="PDBsum" id="1K3O"/>
<dbReference type="PDBsum" id="1K3Y"/>
<dbReference type="PDBsum" id="1LBK"/>
<dbReference type="PDBsum" id="1PKW"/>
<dbReference type="PDBsum" id="1PKZ"/>
<dbReference type="PDBsum" id="1PL1"/>
<dbReference type="PDBsum" id="1PL2"/>
<dbReference type="PDBsum" id="1USB"/>
<dbReference type="PDBsum" id="1XWG"/>
<dbReference type="PDBsum" id="1YDK"/>
<dbReference type="PDBsum" id="2R3X"/>
<dbReference type="PDBsum" id="2R6K"/>
<dbReference type="PDBsum" id="3I69"/>
<dbReference type="PDBsum" id="3I6A"/>
<dbReference type="PDBsum" id="3IK9"/>
<dbReference type="PDBsum" id="3KTL"/>
<dbReference type="PDBsum" id="3L0H"/>
<dbReference type="PDBsum" id="3Q74"/>
<dbReference type="PDBsum" id="3U6V"/>
<dbReference type="PDBsum" id="3ZFB"/>
<dbReference type="PDBsum" id="3ZFL"/>
<dbReference type="PDBsum" id="4HJ2"/>
<dbReference type="PDBsum" id="5JCU"/>
<dbReference type="PDBsum" id="5LCZ"/>
<dbReference type="PDBsum" id="5LD0"/>
<dbReference type="PDBsum" id="6ATO"/>
<dbReference type="PDBsum" id="6ATP"/>
<dbReference type="PDBsum" id="6ATQ"/>
<dbReference type="PDBsum" id="6ATR"/>
<dbReference type="PDBsum" id="6YAW"/>
<dbReference type="PDBsum" id="7BIB"/>
<dbReference type="PDBsum" id="7BIC"/>
<dbReference type="PDBsum" id="8BHC"/>
<dbReference type="PDBsum" id="8BHE"/>
<dbReference type="SMR" id="P08263"/>
<dbReference type="BioGRID" id="109193">
    <property type="interactions" value="22"/>
</dbReference>
<dbReference type="FunCoup" id="P08263">
    <property type="interactions" value="162"/>
</dbReference>
<dbReference type="IntAct" id="P08263">
    <property type="interactions" value="20"/>
</dbReference>
<dbReference type="STRING" id="9606.ENSP00000335620"/>
<dbReference type="BindingDB" id="P08263"/>
<dbReference type="ChEMBL" id="CHEMBL3409"/>
<dbReference type="DrugBank" id="DB02486">
    <property type="generic name" value="2-Hydroxyethyl Disulfide"/>
</dbReference>
<dbReference type="DrugBank" id="DB00321">
    <property type="generic name" value="Amitriptyline"/>
</dbReference>
<dbReference type="DrugBank" id="DB00993">
    <property type="generic name" value="Azathioprine"/>
</dbReference>
<dbReference type="DrugBank" id="DB01008">
    <property type="generic name" value="Busulfan"/>
</dbReference>
<dbReference type="DrugBank" id="DB00291">
    <property type="generic name" value="Chlorambucil"/>
</dbReference>
<dbReference type="DrugBank" id="DB11672">
    <property type="generic name" value="Curcumin"/>
</dbReference>
<dbReference type="DrugBank" id="DB03619">
    <property type="generic name" value="Deoxycholic acid"/>
</dbReference>
<dbReference type="DrugBank" id="DB00143">
    <property type="generic name" value="Glutathione"/>
</dbReference>
<dbReference type="DrugBank" id="DB03310">
    <property type="generic name" value="Glutathione disulfide"/>
</dbReference>
<dbReference type="DrugBank" id="DB03003">
    <property type="generic name" value="Glutathione sulfonic acid"/>
</dbReference>
<dbReference type="DrugBank" id="DB13014">
    <property type="generic name" value="Hypericin"/>
</dbReference>
<dbReference type="DrugBank" id="DB02943">
    <property type="generic name" value="N-(4-Aminobutanoyl)-S-(4-methoxybenzyl)-L-cysteinylglycine"/>
</dbReference>
<dbReference type="DrugBank" id="DB14924">
    <property type="generic name" value="Ritlecitinib"/>
</dbReference>
<dbReference type="DrugBank" id="DB03602">
    <property type="generic name" value="S-benzylglutathione"/>
</dbReference>
<dbReference type="DrugBank" id="DB04132">
    <property type="generic name" value="S-Hexylglutathione"/>
</dbReference>
<dbReference type="DrugBank" id="DB01915">
    <property type="generic name" value="S-Hydroxycysteine"/>
</dbReference>
<dbReference type="DrugCentral" id="P08263"/>
<dbReference type="SwissLipids" id="SLP:000001476"/>
<dbReference type="GlyGen" id="P08263">
    <property type="glycosylation" value="1 site"/>
</dbReference>
<dbReference type="iPTMnet" id="P08263"/>
<dbReference type="PhosphoSitePlus" id="P08263"/>
<dbReference type="BioMuta" id="GSTA1"/>
<dbReference type="DMDM" id="121730"/>
<dbReference type="REPRODUCTION-2DPAGE" id="IPI00657682"/>
<dbReference type="jPOST" id="P08263"/>
<dbReference type="MassIVE" id="P08263"/>
<dbReference type="PaxDb" id="9606-ENSP00000335620"/>
<dbReference type="PeptideAtlas" id="P08263"/>
<dbReference type="ProteomicsDB" id="52103"/>
<dbReference type="Antibodypedia" id="30937">
    <property type="antibodies" value="507 antibodies from 34 providers"/>
</dbReference>
<dbReference type="DNASU" id="2938"/>
<dbReference type="Ensembl" id="ENST00000334575.6">
    <property type="protein sequence ID" value="ENSP00000335620.5"/>
    <property type="gene ID" value="ENSG00000243955.6"/>
</dbReference>
<dbReference type="GeneID" id="2938"/>
<dbReference type="KEGG" id="hsa:2938"/>
<dbReference type="MANE-Select" id="ENST00000334575.6">
    <property type="protein sequence ID" value="ENSP00000335620.5"/>
    <property type="RefSeq nucleotide sequence ID" value="NM_145740.5"/>
    <property type="RefSeq protein sequence ID" value="NP_665683.1"/>
</dbReference>
<dbReference type="UCSC" id="uc003paz.4">
    <property type="organism name" value="human"/>
</dbReference>
<dbReference type="AGR" id="HGNC:4626"/>
<dbReference type="CTD" id="2938"/>
<dbReference type="DisGeNET" id="2938"/>
<dbReference type="GeneCards" id="GSTA1"/>
<dbReference type="HGNC" id="HGNC:4626">
    <property type="gene designation" value="GSTA1"/>
</dbReference>
<dbReference type="HPA" id="ENSG00000243955">
    <property type="expression patterns" value="Tissue enhanced (adrenal gland, kidney, liver)"/>
</dbReference>
<dbReference type="MIM" id="138359">
    <property type="type" value="gene"/>
</dbReference>
<dbReference type="neXtProt" id="NX_P08263"/>
<dbReference type="OpenTargets" id="ENSG00000243955"/>
<dbReference type="PharmGKB" id="PA29016"/>
<dbReference type="VEuPathDB" id="HostDB:ENSG00000243955"/>
<dbReference type="eggNOG" id="KOG1695">
    <property type="taxonomic scope" value="Eukaryota"/>
</dbReference>
<dbReference type="GeneTree" id="ENSGT00940000164034"/>
<dbReference type="HOGENOM" id="CLU_039475_4_0_1"/>
<dbReference type="InParanoid" id="P08263"/>
<dbReference type="OMA" id="AYLNIDY"/>
<dbReference type="OrthoDB" id="414243at2759"/>
<dbReference type="PAN-GO" id="P08263">
    <property type="GO annotations" value="4 GO annotations based on evolutionary models"/>
</dbReference>
<dbReference type="PhylomeDB" id="P08263"/>
<dbReference type="TreeFam" id="TF105321"/>
<dbReference type="BioCyc" id="MetaCyc:G66-32542-MONOMER"/>
<dbReference type="BRENDA" id="2.5.1.18">
    <property type="organism ID" value="2681"/>
</dbReference>
<dbReference type="PathwayCommons" id="P08263"/>
<dbReference type="Reactome" id="R-HSA-156590">
    <property type="pathway name" value="Glutathione conjugation"/>
</dbReference>
<dbReference type="Reactome" id="R-HSA-189483">
    <property type="pathway name" value="Heme degradation"/>
</dbReference>
<dbReference type="Reactome" id="R-HSA-9748787">
    <property type="pathway name" value="Azathioprine ADME"/>
</dbReference>
<dbReference type="Reactome" id="R-HSA-9818027">
    <property type="pathway name" value="NFE2L2 regulating anti-oxidant/detoxification enzymes"/>
</dbReference>
<dbReference type="SABIO-RK" id="P08263"/>
<dbReference type="SignaLink" id="P08263"/>
<dbReference type="SIGNOR" id="P08263"/>
<dbReference type="BioGRID-ORCS" id="2938">
    <property type="hits" value="12 hits in 1067 CRISPR screens"/>
</dbReference>
<dbReference type="CD-CODE" id="91857CE7">
    <property type="entry name" value="Nucleolus"/>
</dbReference>
<dbReference type="ChiTaRS" id="GSTA1">
    <property type="organism name" value="human"/>
</dbReference>
<dbReference type="EvolutionaryTrace" id="P08263"/>
<dbReference type="GeneWiki" id="Glutathione_S-transferase_A1"/>
<dbReference type="GenomeRNAi" id="2938"/>
<dbReference type="Pharos" id="P08263">
    <property type="development level" value="Tchem"/>
</dbReference>
<dbReference type="PRO" id="PR:P08263"/>
<dbReference type="Proteomes" id="UP000005640">
    <property type="component" value="Chromosome 6"/>
</dbReference>
<dbReference type="RNAct" id="P08263">
    <property type="molecule type" value="protein"/>
</dbReference>
<dbReference type="Bgee" id="ENSG00000243955">
    <property type="expression patterns" value="Expressed in bronchial epithelial cell and 137 other cell types or tissues"/>
</dbReference>
<dbReference type="ExpressionAtlas" id="P08263">
    <property type="expression patterns" value="baseline and differential"/>
</dbReference>
<dbReference type="GO" id="GO:0005829">
    <property type="term" value="C:cytosol"/>
    <property type="evidence" value="ECO:0000314"/>
    <property type="project" value="HPA"/>
</dbReference>
<dbReference type="GO" id="GO:0070062">
    <property type="term" value="C:extracellular exosome"/>
    <property type="evidence" value="ECO:0007005"/>
    <property type="project" value="UniProtKB"/>
</dbReference>
<dbReference type="GO" id="GO:0005504">
    <property type="term" value="F:fatty acid binding"/>
    <property type="evidence" value="ECO:0000353"/>
    <property type="project" value="BHF-UCL"/>
</dbReference>
<dbReference type="GO" id="GO:0004602">
    <property type="term" value="F:glutathione peroxidase activity"/>
    <property type="evidence" value="ECO:0000314"/>
    <property type="project" value="BHF-UCL"/>
</dbReference>
<dbReference type="GO" id="GO:0004364">
    <property type="term" value="F:glutathione transferase activity"/>
    <property type="evidence" value="ECO:0000314"/>
    <property type="project" value="UniProtKB"/>
</dbReference>
<dbReference type="GO" id="GO:0004769">
    <property type="term" value="F:steroid Delta-isomerase activity"/>
    <property type="evidence" value="ECO:0000314"/>
    <property type="project" value="UniProtKB"/>
</dbReference>
<dbReference type="GO" id="GO:0030855">
    <property type="term" value="P:epithelial cell differentiation"/>
    <property type="evidence" value="ECO:0000270"/>
    <property type="project" value="UniProtKB"/>
</dbReference>
<dbReference type="GO" id="GO:1901687">
    <property type="term" value="P:glutathione derivative biosynthetic process"/>
    <property type="evidence" value="ECO:0000314"/>
    <property type="project" value="UniProtKB"/>
</dbReference>
<dbReference type="GO" id="GO:0006749">
    <property type="term" value="P:glutathione metabolic process"/>
    <property type="evidence" value="ECO:0000314"/>
    <property type="project" value="UniProtKB"/>
</dbReference>
<dbReference type="GO" id="GO:0043651">
    <property type="term" value="P:linoleic acid metabolic process"/>
    <property type="evidence" value="ECO:0000314"/>
    <property type="project" value="BHF-UCL"/>
</dbReference>
<dbReference type="GO" id="GO:0006693">
    <property type="term" value="P:prostaglandin metabolic process"/>
    <property type="evidence" value="ECO:0000314"/>
    <property type="project" value="UniProtKB"/>
</dbReference>
<dbReference type="GO" id="GO:0006805">
    <property type="term" value="P:xenobiotic metabolic process"/>
    <property type="evidence" value="ECO:0000318"/>
    <property type="project" value="GO_Central"/>
</dbReference>
<dbReference type="CDD" id="cd03208">
    <property type="entry name" value="GST_C_Alpha"/>
    <property type="match status" value="1"/>
</dbReference>
<dbReference type="CDD" id="cd03077">
    <property type="entry name" value="GST_N_Alpha"/>
    <property type="match status" value="1"/>
</dbReference>
<dbReference type="DisProt" id="DP01506"/>
<dbReference type="FunFam" id="1.20.1050.10:FF:000005">
    <property type="entry name" value="Glutathione S-transferase A1"/>
    <property type="match status" value="1"/>
</dbReference>
<dbReference type="Gene3D" id="1.20.1050.10">
    <property type="match status" value="1"/>
</dbReference>
<dbReference type="Gene3D" id="3.40.30.10">
    <property type="entry name" value="Glutaredoxin"/>
    <property type="match status" value="1"/>
</dbReference>
<dbReference type="InterPro" id="IPR010987">
    <property type="entry name" value="Glutathione-S-Trfase_C-like"/>
</dbReference>
<dbReference type="InterPro" id="IPR036282">
    <property type="entry name" value="Glutathione-S-Trfase_C_sf"/>
</dbReference>
<dbReference type="InterPro" id="IPR040079">
    <property type="entry name" value="Glutathione_S-Trfase"/>
</dbReference>
<dbReference type="InterPro" id="IPR004045">
    <property type="entry name" value="Glutathione_S-Trfase_N"/>
</dbReference>
<dbReference type="InterPro" id="IPR003080">
    <property type="entry name" value="GST_alpha"/>
</dbReference>
<dbReference type="InterPro" id="IPR004046">
    <property type="entry name" value="GST_C"/>
</dbReference>
<dbReference type="InterPro" id="IPR050213">
    <property type="entry name" value="GST_superfamily"/>
</dbReference>
<dbReference type="InterPro" id="IPR036249">
    <property type="entry name" value="Thioredoxin-like_sf"/>
</dbReference>
<dbReference type="PANTHER" id="PTHR11571">
    <property type="entry name" value="GLUTATHIONE S-TRANSFERASE"/>
    <property type="match status" value="1"/>
</dbReference>
<dbReference type="PANTHER" id="PTHR11571:SF107">
    <property type="entry name" value="GLUTATHIONE S-TRANSFERASE A1"/>
    <property type="match status" value="1"/>
</dbReference>
<dbReference type="Pfam" id="PF00043">
    <property type="entry name" value="GST_C"/>
    <property type="match status" value="1"/>
</dbReference>
<dbReference type="Pfam" id="PF02798">
    <property type="entry name" value="GST_N"/>
    <property type="match status" value="1"/>
</dbReference>
<dbReference type="PRINTS" id="PR01266">
    <property type="entry name" value="GSTRNSFRASEA"/>
</dbReference>
<dbReference type="SFLD" id="SFLDG01205">
    <property type="entry name" value="AMPS.1"/>
    <property type="match status" value="1"/>
</dbReference>
<dbReference type="SFLD" id="SFLDS00019">
    <property type="entry name" value="Glutathione_Transferase_(cytos"/>
    <property type="match status" value="1"/>
</dbReference>
<dbReference type="SUPFAM" id="SSF47616">
    <property type="entry name" value="GST C-terminal domain-like"/>
    <property type="match status" value="1"/>
</dbReference>
<dbReference type="SUPFAM" id="SSF52833">
    <property type="entry name" value="Thioredoxin-like"/>
    <property type="match status" value="1"/>
</dbReference>
<dbReference type="PROSITE" id="PS50405">
    <property type="entry name" value="GST_CTER"/>
    <property type="match status" value="1"/>
</dbReference>
<dbReference type="PROSITE" id="PS50404">
    <property type="entry name" value="GST_NTER"/>
    <property type="match status" value="1"/>
</dbReference>
<keyword id="KW-0002">3D-structure</keyword>
<keyword id="KW-0007">Acetylation</keyword>
<keyword id="KW-0963">Cytoplasm</keyword>
<keyword id="KW-0903">Direct protein sequencing</keyword>
<keyword id="KW-0413">Isomerase</keyword>
<keyword id="KW-0443">Lipid metabolism</keyword>
<keyword id="KW-0560">Oxidoreductase</keyword>
<keyword id="KW-0575">Peroxidase</keyword>
<keyword id="KW-1267">Proteomics identification</keyword>
<keyword id="KW-1185">Reference proteome</keyword>
<keyword id="KW-0808">Transferase</keyword>
<feature type="chain" id="PRO_0000423203" description="Glutathione S-transferase A1">
    <location>
        <begin position="1"/>
        <end position="222"/>
    </location>
</feature>
<feature type="initiator methionine" description="Removed; alternate" evidence="1 12">
    <location>
        <position position="1"/>
    </location>
</feature>
<feature type="chain" id="PRO_0000185783" description="Glutathione S-transferase A1, N-terminally processed">
    <location>
        <begin position="2"/>
        <end position="222"/>
    </location>
</feature>
<feature type="domain" description="GST N-terminal">
    <location>
        <begin position="3"/>
        <end position="83"/>
    </location>
</feature>
<feature type="domain" description="GST C-terminal">
    <location>
        <begin position="85"/>
        <end position="207"/>
    </location>
</feature>
<feature type="binding site" evidence="7 9">
    <location>
        <position position="9"/>
    </location>
    <ligand>
        <name>glutathione</name>
        <dbReference type="ChEBI" id="CHEBI:57925"/>
    </ligand>
</feature>
<feature type="binding site" evidence="7 9">
    <location>
        <position position="45"/>
    </location>
    <ligand>
        <name>glutathione</name>
        <dbReference type="ChEBI" id="CHEBI:57925"/>
    </ligand>
</feature>
<feature type="binding site" evidence="7 9">
    <location>
        <begin position="54"/>
        <end position="55"/>
    </location>
    <ligand>
        <name>glutathione</name>
        <dbReference type="ChEBI" id="CHEBI:57925"/>
    </ligand>
</feature>
<feature type="binding site" evidence="7 9">
    <location>
        <begin position="67"/>
        <end position="68"/>
    </location>
    <ligand>
        <name>glutathione</name>
        <dbReference type="ChEBI" id="CHEBI:57925"/>
    </ligand>
</feature>
<feature type="modified residue" description="N-acetylmethionine" evidence="2">
    <location>
        <position position="1"/>
    </location>
</feature>
<feature type="modified residue" description="N-acetylalanine; in Glutathione S-transferase A1, N-terminally processed" evidence="1">
    <location>
        <position position="2"/>
    </location>
</feature>
<feature type="modified residue" description="N6-succinyllysine" evidence="1">
    <location>
        <position position="4"/>
    </location>
</feature>
<feature type="sequence variant" id="VAR_033978" description="In dbSNP:rs1051578.">
    <original>T</original>
    <variation>I</variation>
    <location>
        <position position="19"/>
    </location>
</feature>
<feature type="sequence variant" id="VAR_049482" description="In dbSNP:rs1051745.">
    <original>P</original>
    <variation>Q</variation>
    <location>
        <position position="113"/>
    </location>
</feature>
<feature type="sequence variant" id="VAR_049483" description="In dbSNP:rs1051757.">
    <original>K</original>
    <variation>Q</variation>
    <location>
        <position position="117"/>
    </location>
</feature>
<feature type="mutagenesis site" description="Decreased isomerase activity." evidence="3">
    <original>Y</original>
    <variation>F</variation>
    <location>
        <position position="9"/>
    </location>
</feature>
<feature type="mutagenesis site" description="No significant effect on enzyme activity. Reduces protein stability." evidence="10">
    <original>I</original>
    <variation>A</variation>
    <variation>V</variation>
    <location>
        <position position="71"/>
    </location>
</feature>
<feature type="mutagenesis site" description="Confers ability to hydrolyze S-glutathionyl benzoate to glutathione and benzoic acid." evidence="5">
    <original>A</original>
    <variation>H</variation>
    <location>
        <position position="216"/>
    </location>
</feature>
<feature type="sequence conflict" description="In Ref. 3; AAA36174." evidence="15" ref="3">
    <original>S</original>
    <variation>C</variation>
    <location>
        <position position="18"/>
    </location>
</feature>
<feature type="sequence conflict" description="In Ref. 7; AAT06769." evidence="15" ref="7">
    <original>M</original>
    <variation>T</variation>
    <location>
        <position position="51"/>
    </location>
</feature>
<feature type="sequence conflict" description="In Ref. 3; AAA36174." evidence="15" ref="3">
    <original>PMV</original>
    <variation>AML</variation>
    <location>
        <begin position="56"/>
        <end position="58"/>
    </location>
</feature>
<feature type="sequence conflict" description="In Ref. 13; AA sequence." evidence="15" ref="13">
    <original>S</original>
    <variation>L</variation>
    <location>
        <position position="212"/>
    </location>
</feature>
<feature type="sequence conflict" description="In Ref. 12; AA sequence." evidence="15" ref="12">
    <original>A</original>
    <variation>S</variation>
    <location>
        <position position="216"/>
    </location>
</feature>
<feature type="strand" evidence="20">
    <location>
        <begin position="6"/>
        <end position="13"/>
    </location>
</feature>
<feature type="turn" evidence="20">
    <location>
        <begin position="14"/>
        <end position="16"/>
    </location>
</feature>
<feature type="helix" evidence="20">
    <location>
        <begin position="17"/>
        <end position="25"/>
    </location>
</feature>
<feature type="strand" evidence="20">
    <location>
        <begin position="31"/>
        <end position="35"/>
    </location>
</feature>
<feature type="helix" evidence="20">
    <location>
        <begin position="38"/>
        <end position="46"/>
    </location>
</feature>
<feature type="strand" evidence="20">
    <location>
        <begin position="57"/>
        <end position="60"/>
    </location>
</feature>
<feature type="strand" evidence="20">
    <location>
        <begin position="63"/>
        <end position="67"/>
    </location>
</feature>
<feature type="helix" evidence="20">
    <location>
        <begin position="68"/>
        <end position="78"/>
    </location>
</feature>
<feature type="helix" evidence="20">
    <location>
        <begin position="86"/>
        <end position="108"/>
    </location>
</feature>
<feature type="helix" evidence="20">
    <location>
        <begin position="109"/>
        <end position="111"/>
    </location>
</feature>
<feature type="helix" evidence="20">
    <location>
        <begin position="114"/>
        <end position="130"/>
    </location>
</feature>
<feature type="helix" evidence="20">
    <location>
        <begin position="132"/>
        <end position="143"/>
    </location>
</feature>
<feature type="strand" evidence="20">
    <location>
        <begin position="146"/>
        <end position="149"/>
    </location>
</feature>
<feature type="helix" evidence="20">
    <location>
        <begin position="155"/>
        <end position="170"/>
    </location>
</feature>
<feature type="turn" evidence="20">
    <location>
        <begin position="172"/>
        <end position="177"/>
    </location>
</feature>
<feature type="helix" evidence="20">
    <location>
        <begin position="179"/>
        <end position="190"/>
    </location>
</feature>
<feature type="helix" evidence="20">
    <location>
        <begin position="192"/>
        <end position="198"/>
    </location>
</feature>
<feature type="helix" evidence="20">
    <location>
        <begin position="210"/>
        <end position="220"/>
    </location>
</feature>
<protein>
    <recommendedName>
        <fullName evidence="18 19">Glutathione S-transferase A1</fullName>
        <ecNumber evidence="10">2.5.1.18</ecNumber>
    </recommendedName>
    <alternativeName>
        <fullName evidence="17">13-hydroperoxyoctadecadienoate peroxidase</fullName>
        <ecNumber evidence="8">1.11.1.-</ecNumber>
    </alternativeName>
    <alternativeName>
        <fullName evidence="16">Androst-5-ene-3,17-dione isomerase</fullName>
        <ecNumber evidence="3">5.3.3.-</ecNumber>
    </alternativeName>
    <alternativeName>
        <fullName>GST HA subunit 1</fullName>
    </alternativeName>
    <alternativeName>
        <fullName>GST class-alpha member 1</fullName>
    </alternativeName>
    <alternativeName>
        <fullName>GST-epsilon</fullName>
    </alternativeName>
    <alternativeName>
        <fullName>GSTA1-1</fullName>
    </alternativeName>
    <alternativeName>
        <fullName>GTH1</fullName>
    </alternativeName>
    <component>
        <recommendedName>
            <fullName>Glutathione S-transferase A1, N-terminally processed</fullName>
        </recommendedName>
    </component>
</protein>
<name>GSTA1_HUMAN</name>
<gene>
    <name type="primary">GSTA1</name>
</gene>